<evidence type="ECO:0000250" key="1"/>
<evidence type="ECO:0000250" key="2">
    <source>
        <dbReference type="UniProtKB" id="P04759"/>
    </source>
</evidence>
<evidence type="ECO:0000250" key="3">
    <source>
        <dbReference type="UniProtKB" id="Q07001"/>
    </source>
</evidence>
<evidence type="ECO:0000255" key="4"/>
<evidence type="ECO:0000305" key="5"/>
<name>ACHD_MOUSE</name>
<comment type="function">
    <text>After binding acetylcholine, the AChR responds by an extensive change in conformation that affects all subunits and leads to opening of an ion-conducting channel across the plasma membrane.</text>
</comment>
<comment type="catalytic activity">
    <reaction evidence="2">
        <text>K(+)(in) = K(+)(out)</text>
        <dbReference type="Rhea" id="RHEA:29463"/>
        <dbReference type="ChEBI" id="CHEBI:29103"/>
    </reaction>
</comment>
<comment type="catalytic activity">
    <reaction evidence="2">
        <text>Na(+)(in) = Na(+)(out)</text>
        <dbReference type="Rhea" id="RHEA:34963"/>
        <dbReference type="ChEBI" id="CHEBI:29101"/>
    </reaction>
</comment>
<comment type="subunit">
    <text evidence="3">Pentamer of two alpha chains, and one each of the beta, delta, and gamma (in immature muscle) or epsilon (in mature muscle) chains. The muscle heteropentamer composed of alpha-1, beta-1, delta, epsilon subunits interacts with the alpha-conotoxin ImII (By similarity).</text>
</comment>
<comment type="subcellular location">
    <subcellularLocation>
        <location>Postsynaptic cell membrane</location>
        <topology>Multi-pass membrane protein</topology>
    </subcellularLocation>
    <subcellularLocation>
        <location>Cell membrane</location>
        <topology>Multi-pass membrane protein</topology>
    </subcellularLocation>
</comment>
<comment type="similarity">
    <text evidence="5">Belongs to the ligand-gated ion channel (TC 1.A.9) family. Acetylcholine receptor (TC 1.A.9.1) subfamily. Delta/CHRND sub-subfamily.</text>
</comment>
<keyword id="KW-1003">Cell membrane</keyword>
<keyword id="KW-1015">Disulfide bond</keyword>
<keyword id="KW-0325">Glycoprotein</keyword>
<keyword id="KW-0407">Ion channel</keyword>
<keyword id="KW-0406">Ion transport</keyword>
<keyword id="KW-1071">Ligand-gated ion channel</keyword>
<keyword id="KW-0472">Membrane</keyword>
<keyword id="KW-0597">Phosphoprotein</keyword>
<keyword id="KW-0628">Postsynaptic cell membrane</keyword>
<keyword id="KW-0675">Receptor</keyword>
<keyword id="KW-1185">Reference proteome</keyword>
<keyword id="KW-0732">Signal</keyword>
<keyword id="KW-0770">Synapse</keyword>
<keyword id="KW-0812">Transmembrane</keyword>
<keyword id="KW-1133">Transmembrane helix</keyword>
<keyword id="KW-0813">Transport</keyword>
<sequence length="520" mass="59143">MAGPVLTLGLLAALVVCALPGSWGLNEEQRLIQHLFNEKGYDKDLRPVARKEDKVDVALSLTLSNLISLKEVEETLTTNVWIDHAWVDSRLQWDANDFGNITVLRLPPDMVWLPEIVLENNNDGSFQISYACNVLVYDSGYVTWLPPAIFRSSCPISVTYFPFDWQNCSLKFSSLKYTAKEITLSLKQEEENNRSYPIEWIIIDPEGFTENGEWEIVHRAAKLNVDPSVPMDSTNHQDVTFYLIIRRKPLFYIINILVPCVLISFMINLVFYLPGDCGEKTSVAISVLLAQSVFLLLISKRLPATSMAIPLVGKFLLFGMVLVTMVVVICVIVLNIHFRTPSTHVLSEGVKKFFLETLPKLLHMSRPAEEDPGPRALIRRSSSLGYICKAEEYFSLKSRSDLMFEKQSERHGLARRLTTARRPPASSEQVQQELFNEMKPAVDGANFIVNHMRDQNSYNEEKDNWNQVARTVDRLCLFVVTPVMVVGTAWIFLQGVYNQPPLQPFPGDPFSYSEQDKRFI</sequence>
<protein>
    <recommendedName>
        <fullName>Acetylcholine receptor subunit delta</fullName>
    </recommendedName>
</protein>
<feature type="signal peptide">
    <location>
        <begin position="1"/>
        <end position="24"/>
    </location>
</feature>
<feature type="chain" id="PRO_0000000323" description="Acetylcholine receptor subunit delta">
    <location>
        <begin position="25"/>
        <end position="520"/>
    </location>
</feature>
<feature type="topological domain" description="Extracellular">
    <location>
        <begin position="25"/>
        <end position="248"/>
    </location>
</feature>
<feature type="transmembrane region" description="Helical">
    <location>
        <begin position="249"/>
        <end position="273"/>
    </location>
</feature>
<feature type="transmembrane region" description="Helical">
    <location>
        <begin position="281"/>
        <end position="299"/>
    </location>
</feature>
<feature type="transmembrane region" description="Helical">
    <location>
        <begin position="315"/>
        <end position="336"/>
    </location>
</feature>
<feature type="topological domain" description="Cytoplasmic">
    <location>
        <begin position="337"/>
        <end position="474"/>
    </location>
</feature>
<feature type="transmembrane region" description="Helical">
    <location>
        <begin position="475"/>
        <end position="493"/>
    </location>
</feature>
<feature type="modified residue" description="Phosphotyrosine; by Tyr-kinases" evidence="1">
    <location>
        <position position="393"/>
    </location>
</feature>
<feature type="glycosylation site" description="N-linked (GlcNAc...) asparagine" evidence="4">
    <location>
        <position position="100"/>
    </location>
</feature>
<feature type="glycosylation site" description="N-linked (GlcNAc...) asparagine" evidence="4">
    <location>
        <position position="167"/>
    </location>
</feature>
<feature type="glycosylation site" description="N-linked (GlcNAc...) asparagine" evidence="4">
    <location>
        <position position="193"/>
    </location>
</feature>
<feature type="disulfide bond" evidence="1">
    <location>
        <begin position="154"/>
        <end position="168"/>
    </location>
</feature>
<feature type="sequence conflict" description="In Ref. 2; AAA39803." evidence="5" ref="2">
    <original>IC</original>
    <variation>TA</variation>
    <location>
        <begin position="387"/>
        <end position="388"/>
    </location>
</feature>
<gene>
    <name type="primary">Chrnd</name>
    <name type="synonym">Acrd</name>
</gene>
<reference key="1">
    <citation type="journal article" date="1984" name="Proc. Natl. Acad. Sci. U.S.A.">
        <title>Isolation and characterization of a cDNA clone for the complete protein coding region of the delta subunit of the mouse acetylcholine receptor.</title>
        <authorList>
            <person name="Lapolla R.J."/>
            <person name="Mayne K.M."/>
            <person name="Davidson N."/>
        </authorList>
    </citation>
    <scope>NUCLEOTIDE SEQUENCE [MRNA]</scope>
</reference>
<reference key="2">
    <citation type="submission" date="1993-02" db="EMBL/GenBank/DDBJ databases">
        <title>Molecular cloning of the mouse muscle acetylcholine receptor delta subunit.</title>
        <authorList>
            <person name="Boulter J."/>
        </authorList>
    </citation>
    <scope>NUCLEOTIDE SEQUENCE [MRNA]</scope>
</reference>
<reference key="3">
    <citation type="journal article" date="1988" name="Mol. Cell. Biol.">
        <title>Stepwise activation of the mouse acetylcholine receptor delta- and gamma-subunit genes in clonal cell lines.</title>
        <authorList>
            <person name="Crowder C.M."/>
            <person name="Merlie J.P."/>
        </authorList>
    </citation>
    <scope>NUCLEOTIDE SEQUENCE [GENOMIC DNA] OF 1-70</scope>
</reference>
<reference key="4">
    <citation type="journal article" date="1988" name="J. Cell Biol.">
        <title>Isolation and characterization of the mouse acetylcholine receptor delta subunit gene: identification of a 148-bp cis-acting region that confers myotube-specific expression.</title>
        <authorList>
            <person name="Baldwin T.J."/>
            <person name="Burden S.J."/>
        </authorList>
    </citation>
    <scope>NUCLEOTIDE SEQUENCE [GENOMIC DNA] OF 1-17</scope>
</reference>
<proteinExistence type="evidence at transcript level"/>
<accession>P02716</accession>
<accession>Q61267</accession>
<dbReference type="EMBL" id="K02582">
    <property type="protein sequence ID" value="AAA37157.1"/>
    <property type="molecule type" value="mRNA"/>
</dbReference>
<dbReference type="EMBL" id="L10076">
    <property type="protein sequence ID" value="AAA39803.1"/>
    <property type="molecule type" value="mRNA"/>
</dbReference>
<dbReference type="EMBL" id="M22380">
    <property type="protein sequence ID" value="AAA37155.1"/>
    <property type="molecule type" value="Genomic_DNA"/>
</dbReference>
<dbReference type="EMBL" id="X13959">
    <property type="protein sequence ID" value="CAA32140.1"/>
    <property type="molecule type" value="Genomic_DNA"/>
</dbReference>
<dbReference type="CCDS" id="CCDS15129.1"/>
<dbReference type="PIR" id="A03175">
    <property type="entry name" value="ACMSD1"/>
</dbReference>
<dbReference type="PIR" id="I49459">
    <property type="entry name" value="I49459"/>
</dbReference>
<dbReference type="RefSeq" id="NP_067611.2">
    <property type="nucleotide sequence ID" value="NM_021600.3"/>
</dbReference>
<dbReference type="SMR" id="P02716"/>
<dbReference type="BioGRID" id="197937">
    <property type="interactions" value="2"/>
</dbReference>
<dbReference type="ComplexPortal" id="CPX-252">
    <property type="entry name" value="Muscle-type nicotinic acetylcholine receptor complex, alpha1-beta1-delta-gamma"/>
</dbReference>
<dbReference type="ComplexPortal" id="CPX-257">
    <property type="entry name" value="Muscle-type nicotinic acetylcholine receptor complex, alpha1-beta1-delta-epsilon"/>
</dbReference>
<dbReference type="FunCoup" id="P02716">
    <property type="interactions" value="438"/>
</dbReference>
<dbReference type="STRING" id="10090.ENSMUSP00000072983"/>
<dbReference type="BindingDB" id="P02716"/>
<dbReference type="ChEMBL" id="CHEMBL3038460"/>
<dbReference type="ChEMBL" id="CHEMBL3137264"/>
<dbReference type="GlyCosmos" id="P02716">
    <property type="glycosylation" value="3 sites, No reported glycans"/>
</dbReference>
<dbReference type="GlyGen" id="P02716">
    <property type="glycosylation" value="3 sites"/>
</dbReference>
<dbReference type="iPTMnet" id="P02716"/>
<dbReference type="PhosphoSitePlus" id="P02716"/>
<dbReference type="SwissPalm" id="P02716"/>
<dbReference type="PaxDb" id="10090-ENSMUSP00000072983"/>
<dbReference type="Antibodypedia" id="20219">
    <property type="antibodies" value="193 antibodies from 26 providers"/>
</dbReference>
<dbReference type="DNASU" id="11447"/>
<dbReference type="Ensembl" id="ENSMUST00000073252.9">
    <property type="protein sequence ID" value="ENSMUSP00000072983.3"/>
    <property type="gene ID" value="ENSMUSG00000026251.14"/>
</dbReference>
<dbReference type="GeneID" id="11447"/>
<dbReference type="KEGG" id="mmu:11447"/>
<dbReference type="UCSC" id="uc007bwf.2">
    <property type="organism name" value="mouse"/>
</dbReference>
<dbReference type="AGR" id="MGI:87893"/>
<dbReference type="CTD" id="1144"/>
<dbReference type="MGI" id="MGI:87893">
    <property type="gene designation" value="Chrnd"/>
</dbReference>
<dbReference type="VEuPathDB" id="HostDB:ENSMUSG00000026251"/>
<dbReference type="eggNOG" id="KOG3645">
    <property type="taxonomic scope" value="Eukaryota"/>
</dbReference>
<dbReference type="GeneTree" id="ENSGT00940000159794"/>
<dbReference type="InParanoid" id="P02716"/>
<dbReference type="OMA" id="NFIVSHM"/>
<dbReference type="OrthoDB" id="5975154at2759"/>
<dbReference type="PhylomeDB" id="P02716"/>
<dbReference type="TreeFam" id="TF315605"/>
<dbReference type="Reactome" id="R-MMU-629587">
    <property type="pathway name" value="Highly sodium permeable postsynaptic acetylcholine nicotinic receptors"/>
</dbReference>
<dbReference type="BioGRID-ORCS" id="11447">
    <property type="hits" value="1 hit in 78 CRISPR screens"/>
</dbReference>
<dbReference type="PRO" id="PR:P02716"/>
<dbReference type="Proteomes" id="UP000000589">
    <property type="component" value="Chromosome 1"/>
</dbReference>
<dbReference type="RNAct" id="P02716">
    <property type="molecule type" value="protein"/>
</dbReference>
<dbReference type="Bgee" id="ENSMUSG00000026251">
    <property type="expression patterns" value="Expressed in secondary oocyte and 21 other cell types or tissues"/>
</dbReference>
<dbReference type="ExpressionAtlas" id="P02716">
    <property type="expression patterns" value="baseline and differential"/>
</dbReference>
<dbReference type="GO" id="GO:0005892">
    <property type="term" value="C:acetylcholine-gated channel complex"/>
    <property type="evidence" value="ECO:0000314"/>
    <property type="project" value="MGI"/>
</dbReference>
<dbReference type="GO" id="GO:0031594">
    <property type="term" value="C:neuromuscular junction"/>
    <property type="evidence" value="ECO:0000314"/>
    <property type="project" value="SynGO"/>
</dbReference>
<dbReference type="GO" id="GO:0005886">
    <property type="term" value="C:plasma membrane"/>
    <property type="evidence" value="ECO:0000314"/>
    <property type="project" value="MGI"/>
</dbReference>
<dbReference type="GO" id="GO:0099634">
    <property type="term" value="C:postsynaptic specialization membrane"/>
    <property type="evidence" value="ECO:0000314"/>
    <property type="project" value="SynGO"/>
</dbReference>
<dbReference type="GO" id="GO:0022848">
    <property type="term" value="F:acetylcholine-gated monoatomic cation-selective channel activity"/>
    <property type="evidence" value="ECO:0000316"/>
    <property type="project" value="MGI"/>
</dbReference>
<dbReference type="GO" id="GO:0004888">
    <property type="term" value="F:transmembrane signaling receptor activity"/>
    <property type="evidence" value="ECO:0007669"/>
    <property type="project" value="InterPro"/>
</dbReference>
<dbReference type="GO" id="GO:0042391">
    <property type="term" value="P:regulation of membrane potential"/>
    <property type="evidence" value="ECO:0000316"/>
    <property type="project" value="MGI"/>
</dbReference>
<dbReference type="GO" id="GO:0003009">
    <property type="term" value="P:skeletal muscle contraction"/>
    <property type="evidence" value="ECO:0007669"/>
    <property type="project" value="Ensembl"/>
</dbReference>
<dbReference type="GO" id="GO:0048630">
    <property type="term" value="P:skeletal muscle tissue growth"/>
    <property type="evidence" value="ECO:0007669"/>
    <property type="project" value="Ensembl"/>
</dbReference>
<dbReference type="CDD" id="cd19064">
    <property type="entry name" value="LGIC_TM_nAChR"/>
    <property type="match status" value="1"/>
</dbReference>
<dbReference type="FunFam" id="1.20.58.390:FF:000029">
    <property type="entry name" value="acetylcholine receptor subunit delta isoform X1"/>
    <property type="match status" value="1"/>
</dbReference>
<dbReference type="FunFam" id="1.20.58.390:FF:000010">
    <property type="entry name" value="Nicotinic acetylcholine receptor subunit epsilon"/>
    <property type="match status" value="1"/>
</dbReference>
<dbReference type="FunFam" id="2.70.170.10:FF:000012">
    <property type="entry name" value="Nicotinic acetylcholine receptor subunit gamma"/>
    <property type="match status" value="1"/>
</dbReference>
<dbReference type="Gene3D" id="2.70.170.10">
    <property type="entry name" value="Neurotransmitter-gated ion-channel ligand-binding domain"/>
    <property type="match status" value="1"/>
</dbReference>
<dbReference type="Gene3D" id="1.20.58.390">
    <property type="entry name" value="Neurotransmitter-gated ion-channel transmembrane domain"/>
    <property type="match status" value="2"/>
</dbReference>
<dbReference type="InterPro" id="IPR006202">
    <property type="entry name" value="Neur_chan_lig-bd"/>
</dbReference>
<dbReference type="InterPro" id="IPR036734">
    <property type="entry name" value="Neur_chan_lig-bd_sf"/>
</dbReference>
<dbReference type="InterPro" id="IPR006201">
    <property type="entry name" value="Neur_channel"/>
</dbReference>
<dbReference type="InterPro" id="IPR036719">
    <property type="entry name" value="Neuro-gated_channel_TM_sf"/>
</dbReference>
<dbReference type="InterPro" id="IPR038050">
    <property type="entry name" value="Neuro_actylchol_rec"/>
</dbReference>
<dbReference type="InterPro" id="IPR006029">
    <property type="entry name" value="Neurotrans-gated_channel_TM"/>
</dbReference>
<dbReference type="InterPro" id="IPR018000">
    <property type="entry name" value="Neurotransmitter_ion_chnl_CS"/>
</dbReference>
<dbReference type="InterPro" id="IPR002394">
    <property type="entry name" value="Nicotinic_acetylcholine_rcpt"/>
</dbReference>
<dbReference type="NCBIfam" id="TIGR00860">
    <property type="entry name" value="LIC"/>
    <property type="match status" value="1"/>
</dbReference>
<dbReference type="PANTHER" id="PTHR18945">
    <property type="entry name" value="NEUROTRANSMITTER GATED ION CHANNEL"/>
    <property type="match status" value="1"/>
</dbReference>
<dbReference type="Pfam" id="PF02931">
    <property type="entry name" value="Neur_chan_LBD"/>
    <property type="match status" value="1"/>
</dbReference>
<dbReference type="Pfam" id="PF02932">
    <property type="entry name" value="Neur_chan_memb"/>
    <property type="match status" value="1"/>
</dbReference>
<dbReference type="PRINTS" id="PR00254">
    <property type="entry name" value="NICOTINICR"/>
</dbReference>
<dbReference type="PRINTS" id="PR00252">
    <property type="entry name" value="NRIONCHANNEL"/>
</dbReference>
<dbReference type="SUPFAM" id="SSF90112">
    <property type="entry name" value="Neurotransmitter-gated ion-channel transmembrane pore"/>
    <property type="match status" value="1"/>
</dbReference>
<dbReference type="SUPFAM" id="SSF63712">
    <property type="entry name" value="Nicotinic receptor ligand binding domain-like"/>
    <property type="match status" value="1"/>
</dbReference>
<dbReference type="PROSITE" id="PS00236">
    <property type="entry name" value="NEUROTR_ION_CHANNEL"/>
    <property type="match status" value="1"/>
</dbReference>
<organism>
    <name type="scientific">Mus musculus</name>
    <name type="common">Mouse</name>
    <dbReference type="NCBI Taxonomy" id="10090"/>
    <lineage>
        <taxon>Eukaryota</taxon>
        <taxon>Metazoa</taxon>
        <taxon>Chordata</taxon>
        <taxon>Craniata</taxon>
        <taxon>Vertebrata</taxon>
        <taxon>Euteleostomi</taxon>
        <taxon>Mammalia</taxon>
        <taxon>Eutheria</taxon>
        <taxon>Euarchontoglires</taxon>
        <taxon>Glires</taxon>
        <taxon>Rodentia</taxon>
        <taxon>Myomorpha</taxon>
        <taxon>Muroidea</taxon>
        <taxon>Muridae</taxon>
        <taxon>Murinae</taxon>
        <taxon>Mus</taxon>
        <taxon>Mus</taxon>
    </lineage>
</organism>